<proteinExistence type="inferred from homology"/>
<sequence>MIQEQTMLNVADNSGARRVMCIKVLGGSHRRYAGVGDIIKITIKEAIPRGKVKKGDVLKAVVVRTKKGVRRPDGSVIRFDGNACVLLNNNSEQPIGTRIFGPVTRELRSEKFMKIISLAPEVL</sequence>
<dbReference type="EMBL" id="CP001063">
    <property type="protein sequence ID" value="ACD10267.1"/>
    <property type="molecule type" value="Genomic_DNA"/>
</dbReference>
<dbReference type="RefSeq" id="WP_000613955.1">
    <property type="nucleotide sequence ID" value="NC_010658.1"/>
</dbReference>
<dbReference type="SMR" id="B2U2S8"/>
<dbReference type="STRING" id="344609.SbBS512_E3695"/>
<dbReference type="GeneID" id="93778677"/>
<dbReference type="KEGG" id="sbc:SbBS512_E3695"/>
<dbReference type="HOGENOM" id="CLU_095071_2_1_6"/>
<dbReference type="Proteomes" id="UP000001030">
    <property type="component" value="Chromosome"/>
</dbReference>
<dbReference type="GO" id="GO:0022625">
    <property type="term" value="C:cytosolic large ribosomal subunit"/>
    <property type="evidence" value="ECO:0007669"/>
    <property type="project" value="TreeGrafter"/>
</dbReference>
<dbReference type="GO" id="GO:0070180">
    <property type="term" value="F:large ribosomal subunit rRNA binding"/>
    <property type="evidence" value="ECO:0007669"/>
    <property type="project" value="TreeGrafter"/>
</dbReference>
<dbReference type="GO" id="GO:0003735">
    <property type="term" value="F:structural constituent of ribosome"/>
    <property type="evidence" value="ECO:0007669"/>
    <property type="project" value="InterPro"/>
</dbReference>
<dbReference type="GO" id="GO:0006412">
    <property type="term" value="P:translation"/>
    <property type="evidence" value="ECO:0007669"/>
    <property type="project" value="UniProtKB-UniRule"/>
</dbReference>
<dbReference type="CDD" id="cd00337">
    <property type="entry name" value="Ribosomal_uL14"/>
    <property type="match status" value="1"/>
</dbReference>
<dbReference type="FunFam" id="2.40.150.20:FF:000001">
    <property type="entry name" value="50S ribosomal protein L14"/>
    <property type="match status" value="1"/>
</dbReference>
<dbReference type="Gene3D" id="2.40.150.20">
    <property type="entry name" value="Ribosomal protein L14"/>
    <property type="match status" value="1"/>
</dbReference>
<dbReference type="HAMAP" id="MF_01367">
    <property type="entry name" value="Ribosomal_uL14"/>
    <property type="match status" value="1"/>
</dbReference>
<dbReference type="InterPro" id="IPR000218">
    <property type="entry name" value="Ribosomal_uL14"/>
</dbReference>
<dbReference type="InterPro" id="IPR005745">
    <property type="entry name" value="Ribosomal_uL14_bac-type"/>
</dbReference>
<dbReference type="InterPro" id="IPR019972">
    <property type="entry name" value="Ribosomal_uL14_CS"/>
</dbReference>
<dbReference type="InterPro" id="IPR036853">
    <property type="entry name" value="Ribosomal_uL14_sf"/>
</dbReference>
<dbReference type="NCBIfam" id="TIGR01067">
    <property type="entry name" value="rplN_bact"/>
    <property type="match status" value="1"/>
</dbReference>
<dbReference type="PANTHER" id="PTHR11761">
    <property type="entry name" value="50S/60S RIBOSOMAL PROTEIN L14/L23"/>
    <property type="match status" value="1"/>
</dbReference>
<dbReference type="PANTHER" id="PTHR11761:SF3">
    <property type="entry name" value="LARGE RIBOSOMAL SUBUNIT PROTEIN UL14M"/>
    <property type="match status" value="1"/>
</dbReference>
<dbReference type="Pfam" id="PF00238">
    <property type="entry name" value="Ribosomal_L14"/>
    <property type="match status" value="1"/>
</dbReference>
<dbReference type="SMART" id="SM01374">
    <property type="entry name" value="Ribosomal_L14"/>
    <property type="match status" value="1"/>
</dbReference>
<dbReference type="SUPFAM" id="SSF50193">
    <property type="entry name" value="Ribosomal protein L14"/>
    <property type="match status" value="1"/>
</dbReference>
<dbReference type="PROSITE" id="PS00049">
    <property type="entry name" value="RIBOSOMAL_L14"/>
    <property type="match status" value="1"/>
</dbReference>
<organism>
    <name type="scientific">Shigella boydii serotype 18 (strain CDC 3083-94 / BS512)</name>
    <dbReference type="NCBI Taxonomy" id="344609"/>
    <lineage>
        <taxon>Bacteria</taxon>
        <taxon>Pseudomonadati</taxon>
        <taxon>Pseudomonadota</taxon>
        <taxon>Gammaproteobacteria</taxon>
        <taxon>Enterobacterales</taxon>
        <taxon>Enterobacteriaceae</taxon>
        <taxon>Shigella</taxon>
    </lineage>
</organism>
<protein>
    <recommendedName>
        <fullName evidence="1">Large ribosomal subunit protein uL14</fullName>
    </recommendedName>
    <alternativeName>
        <fullName evidence="2">50S ribosomal protein L14</fullName>
    </alternativeName>
</protein>
<gene>
    <name evidence="1" type="primary">rplN</name>
    <name type="ordered locus">SbBS512_E3695</name>
</gene>
<reference key="1">
    <citation type="submission" date="2008-05" db="EMBL/GenBank/DDBJ databases">
        <title>Complete sequence of Shigella boydii serotype 18 strain BS512.</title>
        <authorList>
            <person name="Rasko D.A."/>
            <person name="Rosovitz M."/>
            <person name="Maurelli A.T."/>
            <person name="Myers G."/>
            <person name="Seshadri R."/>
            <person name="Cer R."/>
            <person name="Jiang L."/>
            <person name="Ravel J."/>
            <person name="Sebastian Y."/>
        </authorList>
    </citation>
    <scope>NUCLEOTIDE SEQUENCE [LARGE SCALE GENOMIC DNA]</scope>
    <source>
        <strain>CDC 3083-94 / BS512</strain>
    </source>
</reference>
<accession>B2U2S8</accession>
<keyword id="KW-1185">Reference proteome</keyword>
<keyword id="KW-0687">Ribonucleoprotein</keyword>
<keyword id="KW-0689">Ribosomal protein</keyword>
<keyword id="KW-0694">RNA-binding</keyword>
<keyword id="KW-0699">rRNA-binding</keyword>
<comment type="function">
    <text evidence="1">Binds to 23S rRNA. Forms part of two intersubunit bridges in the 70S ribosome.</text>
</comment>
<comment type="subunit">
    <text evidence="1">Part of the 50S ribosomal subunit. Forms a cluster with proteins L3 and L19. In the 70S ribosome, L14 and L19 interact and together make contacts with the 16S rRNA in bridges B5 and B8.</text>
</comment>
<comment type="similarity">
    <text evidence="1">Belongs to the universal ribosomal protein uL14 family.</text>
</comment>
<name>RL14_SHIB3</name>
<evidence type="ECO:0000255" key="1">
    <source>
        <dbReference type="HAMAP-Rule" id="MF_01367"/>
    </source>
</evidence>
<evidence type="ECO:0000305" key="2"/>
<feature type="chain" id="PRO_1000144331" description="Large ribosomal subunit protein uL14">
    <location>
        <begin position="1"/>
        <end position="123"/>
    </location>
</feature>